<keyword id="KW-1185">Reference proteome</keyword>
<keyword id="KW-0687">Ribonucleoprotein</keyword>
<keyword id="KW-0689">Ribosomal protein</keyword>
<keyword id="KW-0694">RNA-binding</keyword>
<keyword id="KW-0699">rRNA-binding</keyword>
<feature type="chain" id="PRO_0000126428" description="Small ribosomal subunit protein uS8">
    <location>
        <begin position="1"/>
        <end position="133"/>
    </location>
</feature>
<feature type="sequence conflict" description="In Ref. 1; AAD40597." evidence="2" ref="1">
    <original>M</original>
    <variation>L</variation>
    <location>
        <position position="114"/>
    </location>
</feature>
<accession>Q9XD22</accession>
<dbReference type="EMBL" id="AF115283">
    <property type="protein sequence ID" value="AAD40597.1"/>
    <property type="molecule type" value="Genomic_DNA"/>
</dbReference>
<dbReference type="EMBL" id="AE010300">
    <property type="protein sequence ID" value="AAN47952.1"/>
    <property type="molecule type" value="Genomic_DNA"/>
</dbReference>
<dbReference type="RefSeq" id="NP_710934.1">
    <property type="nucleotide sequence ID" value="NC_004342.2"/>
</dbReference>
<dbReference type="RefSeq" id="WP_000062824.1">
    <property type="nucleotide sequence ID" value="NC_004342.2"/>
</dbReference>
<dbReference type="SMR" id="Q9XD22"/>
<dbReference type="FunCoup" id="Q9XD22">
    <property type="interactions" value="478"/>
</dbReference>
<dbReference type="STRING" id="189518.LA_0753"/>
<dbReference type="PaxDb" id="189518-LA_0753"/>
<dbReference type="EnsemblBacteria" id="AAN47952">
    <property type="protein sequence ID" value="AAN47952"/>
    <property type="gene ID" value="LA_0753"/>
</dbReference>
<dbReference type="GeneID" id="61142733"/>
<dbReference type="KEGG" id="lil:LA_0753"/>
<dbReference type="PATRIC" id="fig|189518.3.peg.759"/>
<dbReference type="HOGENOM" id="CLU_098428_0_2_12"/>
<dbReference type="InParanoid" id="Q9XD22"/>
<dbReference type="OrthoDB" id="9802617at2"/>
<dbReference type="Proteomes" id="UP000001408">
    <property type="component" value="Chromosome I"/>
</dbReference>
<dbReference type="GO" id="GO:0022627">
    <property type="term" value="C:cytosolic small ribosomal subunit"/>
    <property type="evidence" value="ECO:0000318"/>
    <property type="project" value="GO_Central"/>
</dbReference>
<dbReference type="GO" id="GO:0019843">
    <property type="term" value="F:rRNA binding"/>
    <property type="evidence" value="ECO:0007669"/>
    <property type="project" value="UniProtKB-UniRule"/>
</dbReference>
<dbReference type="GO" id="GO:0003735">
    <property type="term" value="F:structural constituent of ribosome"/>
    <property type="evidence" value="ECO:0000318"/>
    <property type="project" value="GO_Central"/>
</dbReference>
<dbReference type="GO" id="GO:0006412">
    <property type="term" value="P:translation"/>
    <property type="evidence" value="ECO:0007669"/>
    <property type="project" value="UniProtKB-UniRule"/>
</dbReference>
<dbReference type="FunFam" id="3.30.1370.30:FF:000002">
    <property type="entry name" value="30S ribosomal protein S8"/>
    <property type="match status" value="1"/>
</dbReference>
<dbReference type="FunFam" id="3.30.1490.10:FF:000001">
    <property type="entry name" value="30S ribosomal protein S8"/>
    <property type="match status" value="1"/>
</dbReference>
<dbReference type="Gene3D" id="3.30.1370.30">
    <property type="match status" value="1"/>
</dbReference>
<dbReference type="Gene3D" id="3.30.1490.10">
    <property type="match status" value="1"/>
</dbReference>
<dbReference type="HAMAP" id="MF_01302_B">
    <property type="entry name" value="Ribosomal_uS8_B"/>
    <property type="match status" value="1"/>
</dbReference>
<dbReference type="InterPro" id="IPR000630">
    <property type="entry name" value="Ribosomal_uS8"/>
</dbReference>
<dbReference type="InterPro" id="IPR047863">
    <property type="entry name" value="Ribosomal_uS8_CS"/>
</dbReference>
<dbReference type="InterPro" id="IPR035987">
    <property type="entry name" value="Ribosomal_uS8_sf"/>
</dbReference>
<dbReference type="NCBIfam" id="NF001109">
    <property type="entry name" value="PRK00136.1"/>
    <property type="match status" value="1"/>
</dbReference>
<dbReference type="PANTHER" id="PTHR11758">
    <property type="entry name" value="40S RIBOSOMAL PROTEIN S15A"/>
    <property type="match status" value="1"/>
</dbReference>
<dbReference type="Pfam" id="PF00410">
    <property type="entry name" value="Ribosomal_S8"/>
    <property type="match status" value="1"/>
</dbReference>
<dbReference type="SUPFAM" id="SSF56047">
    <property type="entry name" value="Ribosomal protein S8"/>
    <property type="match status" value="1"/>
</dbReference>
<dbReference type="PROSITE" id="PS00053">
    <property type="entry name" value="RIBOSOMAL_S8"/>
    <property type="match status" value="1"/>
</dbReference>
<proteinExistence type="inferred from homology"/>
<sequence length="133" mass="15119">MSMSDPIGDMLTRIRNAGRAKHETCLVPGSKIKKSILDLMKEEGFIKDYESVKVNETFEDYKVFLKYDHTKRPIIRELVRVSTPGRRVYIKSAEIRPYKNNIGTLIVSTSKGIMTGKNARKLKLGGEVILKMS</sequence>
<reference key="1">
    <citation type="journal article" date="2000" name="FEMS Microbiol. Lett.">
        <title>Characterization of the Leptospira interrogans S10-spc-alpha operon.</title>
        <authorList>
            <person name="Zuerner R.L."/>
            <person name="Hartskeerl R.A."/>
            <person name="van de Kemp H."/>
            <person name="Bal A.E."/>
        </authorList>
    </citation>
    <scope>NUCLEOTIDE SEQUENCE [GENOMIC DNA]</scope>
    <source>
        <strain>Lai / Serogroup Icterohaemorrhagiae / Serovar lai</strain>
    </source>
</reference>
<reference key="2">
    <citation type="journal article" date="2003" name="Nature">
        <title>Unique physiological and pathogenic features of Leptospira interrogans revealed by whole-genome sequencing.</title>
        <authorList>
            <person name="Ren S.-X."/>
            <person name="Fu G."/>
            <person name="Jiang X.-G."/>
            <person name="Zeng R."/>
            <person name="Miao Y.-G."/>
            <person name="Xu H."/>
            <person name="Zhang Y.-X."/>
            <person name="Xiong H."/>
            <person name="Lu G."/>
            <person name="Lu L.-F."/>
            <person name="Jiang H.-Q."/>
            <person name="Jia J."/>
            <person name="Tu Y.-F."/>
            <person name="Jiang J.-X."/>
            <person name="Gu W.-Y."/>
            <person name="Zhang Y.-Q."/>
            <person name="Cai Z."/>
            <person name="Sheng H.-H."/>
            <person name="Yin H.-F."/>
            <person name="Zhang Y."/>
            <person name="Zhu G.-F."/>
            <person name="Wan M."/>
            <person name="Huang H.-L."/>
            <person name="Qian Z."/>
            <person name="Wang S.-Y."/>
            <person name="Ma W."/>
            <person name="Yao Z.-J."/>
            <person name="Shen Y."/>
            <person name="Qiang B.-Q."/>
            <person name="Xia Q.-C."/>
            <person name="Guo X.-K."/>
            <person name="Danchin A."/>
            <person name="Saint Girons I."/>
            <person name="Somerville R.L."/>
            <person name="Wen Y.-M."/>
            <person name="Shi M.-H."/>
            <person name="Chen Z."/>
            <person name="Xu J.-G."/>
            <person name="Zhao G.-P."/>
        </authorList>
    </citation>
    <scope>NUCLEOTIDE SEQUENCE [LARGE SCALE GENOMIC DNA]</scope>
    <source>
        <strain>56601</strain>
    </source>
</reference>
<organism>
    <name type="scientific">Leptospira interrogans serogroup Icterohaemorrhagiae serovar Lai (strain 56601)</name>
    <dbReference type="NCBI Taxonomy" id="189518"/>
    <lineage>
        <taxon>Bacteria</taxon>
        <taxon>Pseudomonadati</taxon>
        <taxon>Spirochaetota</taxon>
        <taxon>Spirochaetia</taxon>
        <taxon>Leptospirales</taxon>
        <taxon>Leptospiraceae</taxon>
        <taxon>Leptospira</taxon>
    </lineage>
</organism>
<evidence type="ECO:0000255" key="1">
    <source>
        <dbReference type="HAMAP-Rule" id="MF_01302"/>
    </source>
</evidence>
<evidence type="ECO:0000305" key="2"/>
<protein>
    <recommendedName>
        <fullName evidence="1">Small ribosomal subunit protein uS8</fullName>
    </recommendedName>
    <alternativeName>
        <fullName evidence="2">30S ribosomal protein S8</fullName>
    </alternativeName>
</protein>
<comment type="function">
    <text evidence="1">One of the primary rRNA binding proteins, it binds directly to 16S rRNA central domain where it helps coordinate assembly of the platform of the 30S subunit.</text>
</comment>
<comment type="subunit">
    <text evidence="1">Part of the 30S ribosomal subunit. Contacts proteins S5 and S12.</text>
</comment>
<comment type="similarity">
    <text evidence="1">Belongs to the universal ribosomal protein uS8 family.</text>
</comment>
<name>RS8_LEPIN</name>
<gene>
    <name evidence="1" type="primary">rpsH</name>
    <name type="ordered locus">LA_0753</name>
</gene>